<feature type="chain" id="PRO_1000052296" description="Large ribosomal subunit protein uL24">
    <location>
        <begin position="1"/>
        <end position="109"/>
    </location>
</feature>
<organism>
    <name type="scientific">Rickettsia canadensis (strain McKiel)</name>
    <dbReference type="NCBI Taxonomy" id="293613"/>
    <lineage>
        <taxon>Bacteria</taxon>
        <taxon>Pseudomonadati</taxon>
        <taxon>Pseudomonadota</taxon>
        <taxon>Alphaproteobacteria</taxon>
        <taxon>Rickettsiales</taxon>
        <taxon>Rickettsiaceae</taxon>
        <taxon>Rickettsieae</taxon>
        <taxon>Rickettsia</taxon>
        <taxon>belli group</taxon>
    </lineage>
</organism>
<reference key="1">
    <citation type="submission" date="2007-09" db="EMBL/GenBank/DDBJ databases">
        <title>Complete genome sequence of Rickettsia canadensis.</title>
        <authorList>
            <person name="Madan A."/>
            <person name="Fahey J."/>
            <person name="Helton E."/>
            <person name="Ketteman M."/>
            <person name="Madan A."/>
            <person name="Rodrigues S."/>
            <person name="Sanchez A."/>
            <person name="Whiting M."/>
            <person name="Dasch G."/>
            <person name="Eremeeva M."/>
        </authorList>
    </citation>
    <scope>NUCLEOTIDE SEQUENCE [LARGE SCALE GENOMIC DNA]</scope>
    <source>
        <strain>McKiel</strain>
    </source>
</reference>
<protein>
    <recommendedName>
        <fullName evidence="1">Large ribosomal subunit protein uL24</fullName>
    </recommendedName>
    <alternativeName>
        <fullName evidence="2">50S ribosomal protein L24</fullName>
    </alternativeName>
</protein>
<keyword id="KW-0687">Ribonucleoprotein</keyword>
<keyword id="KW-0689">Ribosomal protein</keyword>
<keyword id="KW-0694">RNA-binding</keyword>
<keyword id="KW-0699">rRNA-binding</keyword>
<sequence length="109" mass="11959">MIKLKVKKGDEVIVITGKHKGKKGKILKVFPEDSKVIVAGVNLVKKHTKPNQMSEGGIRTKELPIHISNIAHIDPKTGRPTKVVFKFLEDGSKVRVAKKSGEIIGKEGK</sequence>
<proteinExistence type="inferred from homology"/>
<evidence type="ECO:0000255" key="1">
    <source>
        <dbReference type="HAMAP-Rule" id="MF_01326"/>
    </source>
</evidence>
<evidence type="ECO:0000305" key="2"/>
<comment type="function">
    <text evidence="1">One of two assembly initiator proteins, it binds directly to the 5'-end of the 23S rRNA, where it nucleates assembly of the 50S subunit.</text>
</comment>
<comment type="function">
    <text evidence="1">One of the proteins that surrounds the polypeptide exit tunnel on the outside of the subunit.</text>
</comment>
<comment type="subunit">
    <text evidence="1">Part of the 50S ribosomal subunit.</text>
</comment>
<comment type="similarity">
    <text evidence="1">Belongs to the universal ribosomal protein uL24 family.</text>
</comment>
<gene>
    <name evidence="1" type="primary">rplX</name>
    <name type="ordered locus">A1E_04315</name>
</gene>
<accession>A8EZK5</accession>
<dbReference type="EMBL" id="CP000409">
    <property type="protein sequence ID" value="ABV73788.1"/>
    <property type="molecule type" value="Genomic_DNA"/>
</dbReference>
<dbReference type="RefSeq" id="WP_012148983.1">
    <property type="nucleotide sequence ID" value="NC_009879.1"/>
</dbReference>
<dbReference type="SMR" id="A8EZK5"/>
<dbReference type="STRING" id="293613.A1E_04315"/>
<dbReference type="KEGG" id="rcm:A1E_04315"/>
<dbReference type="eggNOG" id="COG0198">
    <property type="taxonomic scope" value="Bacteria"/>
</dbReference>
<dbReference type="HOGENOM" id="CLU_093315_2_0_5"/>
<dbReference type="Proteomes" id="UP000007056">
    <property type="component" value="Chromosome"/>
</dbReference>
<dbReference type="GO" id="GO:1990904">
    <property type="term" value="C:ribonucleoprotein complex"/>
    <property type="evidence" value="ECO:0007669"/>
    <property type="project" value="UniProtKB-KW"/>
</dbReference>
<dbReference type="GO" id="GO:0005840">
    <property type="term" value="C:ribosome"/>
    <property type="evidence" value="ECO:0007669"/>
    <property type="project" value="UniProtKB-KW"/>
</dbReference>
<dbReference type="GO" id="GO:0019843">
    <property type="term" value="F:rRNA binding"/>
    <property type="evidence" value="ECO:0007669"/>
    <property type="project" value="UniProtKB-UniRule"/>
</dbReference>
<dbReference type="GO" id="GO:0003735">
    <property type="term" value="F:structural constituent of ribosome"/>
    <property type="evidence" value="ECO:0007669"/>
    <property type="project" value="InterPro"/>
</dbReference>
<dbReference type="GO" id="GO:0006412">
    <property type="term" value="P:translation"/>
    <property type="evidence" value="ECO:0007669"/>
    <property type="project" value="UniProtKB-UniRule"/>
</dbReference>
<dbReference type="CDD" id="cd06089">
    <property type="entry name" value="KOW_RPL26"/>
    <property type="match status" value="1"/>
</dbReference>
<dbReference type="FunFam" id="2.30.30.30:FF:000004">
    <property type="entry name" value="50S ribosomal protein L24"/>
    <property type="match status" value="1"/>
</dbReference>
<dbReference type="Gene3D" id="2.30.30.30">
    <property type="match status" value="1"/>
</dbReference>
<dbReference type="HAMAP" id="MF_01326_B">
    <property type="entry name" value="Ribosomal_uL24_B"/>
    <property type="match status" value="1"/>
</dbReference>
<dbReference type="InterPro" id="IPR005824">
    <property type="entry name" value="KOW"/>
</dbReference>
<dbReference type="InterPro" id="IPR014722">
    <property type="entry name" value="Rib_uL2_dom2"/>
</dbReference>
<dbReference type="InterPro" id="IPR003256">
    <property type="entry name" value="Ribosomal_uL24"/>
</dbReference>
<dbReference type="InterPro" id="IPR005825">
    <property type="entry name" value="Ribosomal_uL24_CS"/>
</dbReference>
<dbReference type="InterPro" id="IPR041988">
    <property type="entry name" value="Ribosomal_uL24_KOW"/>
</dbReference>
<dbReference type="InterPro" id="IPR008991">
    <property type="entry name" value="Translation_prot_SH3-like_sf"/>
</dbReference>
<dbReference type="NCBIfam" id="TIGR01079">
    <property type="entry name" value="rplX_bact"/>
    <property type="match status" value="1"/>
</dbReference>
<dbReference type="PANTHER" id="PTHR12903">
    <property type="entry name" value="MITOCHONDRIAL RIBOSOMAL PROTEIN L24"/>
    <property type="match status" value="1"/>
</dbReference>
<dbReference type="Pfam" id="PF00467">
    <property type="entry name" value="KOW"/>
    <property type="match status" value="1"/>
</dbReference>
<dbReference type="Pfam" id="PF17136">
    <property type="entry name" value="ribosomal_L24"/>
    <property type="match status" value="1"/>
</dbReference>
<dbReference type="SMART" id="SM00739">
    <property type="entry name" value="KOW"/>
    <property type="match status" value="1"/>
</dbReference>
<dbReference type="SUPFAM" id="SSF50104">
    <property type="entry name" value="Translation proteins SH3-like domain"/>
    <property type="match status" value="1"/>
</dbReference>
<dbReference type="PROSITE" id="PS01108">
    <property type="entry name" value="RIBOSOMAL_L24"/>
    <property type="match status" value="1"/>
</dbReference>
<name>RL24_RICCK</name>